<reference key="1">
    <citation type="journal article" date="2003" name="Genome Res.">
        <title>Comparative complete genome sequence analysis of the amino acid replacements responsible for the thermostability of Corynebacterium efficiens.</title>
        <authorList>
            <person name="Nishio Y."/>
            <person name="Nakamura Y."/>
            <person name="Kawarabayasi Y."/>
            <person name="Usuda Y."/>
            <person name="Kimura E."/>
            <person name="Sugimoto S."/>
            <person name="Matsui K."/>
            <person name="Yamagishi A."/>
            <person name="Kikuchi H."/>
            <person name="Ikeo K."/>
            <person name="Gojobori T."/>
        </authorList>
    </citation>
    <scope>NUCLEOTIDE SEQUENCE [LARGE SCALE GENOMIC DNA]</scope>
    <source>
        <strain>DSM 44549 / YS-314 / AJ 12310 / JCM 11189 / NBRC 100395</strain>
    </source>
</reference>
<gene>
    <name evidence="1" type="primary">murA</name>
    <name type="ordered locus">CE2443</name>
</gene>
<organism>
    <name type="scientific">Corynebacterium efficiens (strain DSM 44549 / YS-314 / AJ 12310 / JCM 11189 / NBRC 100395)</name>
    <dbReference type="NCBI Taxonomy" id="196164"/>
    <lineage>
        <taxon>Bacteria</taxon>
        <taxon>Bacillati</taxon>
        <taxon>Actinomycetota</taxon>
        <taxon>Actinomycetes</taxon>
        <taxon>Mycobacteriales</taxon>
        <taxon>Corynebacteriaceae</taxon>
        <taxon>Corynebacterium</taxon>
    </lineage>
</organism>
<keyword id="KW-0131">Cell cycle</keyword>
<keyword id="KW-0132">Cell division</keyword>
<keyword id="KW-0133">Cell shape</keyword>
<keyword id="KW-0961">Cell wall biogenesis/degradation</keyword>
<keyword id="KW-0963">Cytoplasm</keyword>
<keyword id="KW-0573">Peptidoglycan synthesis</keyword>
<keyword id="KW-1185">Reference proteome</keyword>
<keyword id="KW-0808">Transferase</keyword>
<comment type="function">
    <text evidence="1">Cell wall formation. Adds enolpyruvyl to UDP-N-acetylglucosamine.</text>
</comment>
<comment type="catalytic activity">
    <reaction evidence="1">
        <text>phosphoenolpyruvate + UDP-N-acetyl-alpha-D-glucosamine = UDP-N-acetyl-3-O-(1-carboxyvinyl)-alpha-D-glucosamine + phosphate</text>
        <dbReference type="Rhea" id="RHEA:18681"/>
        <dbReference type="ChEBI" id="CHEBI:43474"/>
        <dbReference type="ChEBI" id="CHEBI:57705"/>
        <dbReference type="ChEBI" id="CHEBI:58702"/>
        <dbReference type="ChEBI" id="CHEBI:68483"/>
        <dbReference type="EC" id="2.5.1.7"/>
    </reaction>
</comment>
<comment type="pathway">
    <text evidence="1">Cell wall biogenesis; peptidoglycan biosynthesis.</text>
</comment>
<comment type="subcellular location">
    <subcellularLocation>
        <location evidence="1">Cytoplasm</location>
    </subcellularLocation>
</comment>
<comment type="similarity">
    <text evidence="1">Belongs to the EPSP synthase family. MurA subfamily.</text>
</comment>
<evidence type="ECO:0000255" key="1">
    <source>
        <dbReference type="HAMAP-Rule" id="MF_00111"/>
    </source>
</evidence>
<accession>Q8FMR0</accession>
<feature type="chain" id="PRO_0000231195" description="UDP-N-acetylglucosamine 1-carboxyvinyltransferase">
    <location>
        <begin position="1"/>
        <end position="421"/>
    </location>
</feature>
<feature type="active site" description="Proton donor" evidence="1">
    <location>
        <position position="120"/>
    </location>
</feature>
<feature type="binding site" evidence="1">
    <location>
        <begin position="26"/>
        <end position="27"/>
    </location>
    <ligand>
        <name>phosphoenolpyruvate</name>
        <dbReference type="ChEBI" id="CHEBI:58702"/>
    </ligand>
</feature>
<feature type="binding site" evidence="1">
    <location>
        <position position="96"/>
    </location>
    <ligand>
        <name>UDP-N-acetyl-alpha-D-glucosamine</name>
        <dbReference type="ChEBI" id="CHEBI:57705"/>
    </ligand>
</feature>
<feature type="binding site" evidence="1">
    <location>
        <position position="308"/>
    </location>
    <ligand>
        <name>UDP-N-acetyl-alpha-D-glucosamine</name>
        <dbReference type="ChEBI" id="CHEBI:57705"/>
    </ligand>
</feature>
<feature type="binding site" evidence="1">
    <location>
        <position position="330"/>
    </location>
    <ligand>
        <name>UDP-N-acetyl-alpha-D-glucosamine</name>
        <dbReference type="ChEBI" id="CHEBI:57705"/>
    </ligand>
</feature>
<sequence length="421" mass="44600">MGGVKDKFLVKGGARLQGSVRVDGAKNSVLKLMAAALLAEGTTTLTNCPEILDVPLMRDVLVGLGCEVEIDGHTVTIHTPAELKSDADFPAVTQFRASVCVLGPLTARCGRAVVSLPGGDAIGSRPLDMHQSGLEQLGATTRTQHGAVVAEADKLVGAEISLDFPSVGATENILMASVMAEGQTTLDNAAREPEIVDLCRMLRSMGADIEGEGSPKITINGVEKLHPTSHEVIGDRIVAGTWAFAAAMTRGDVTVGGIAPRYLHLPLEKLKLAGAQVDTFENGFRVVMNKRPKSTDYQTLPFPGFPTDLQPMAIGLNAIADGVAVVTENVFESRFRFVDEMQRLGADTSVDGHHVVIRGIEELSSTTVWSSDIRAGAGLVIAALCAEGTTEVRDVFHIDRGYPNFVENLQALGADIQRVVA</sequence>
<name>MURA_COREF</name>
<dbReference type="EC" id="2.5.1.7" evidence="1"/>
<dbReference type="EMBL" id="BA000035">
    <property type="protein sequence ID" value="BAC19253.1"/>
    <property type="molecule type" value="Genomic_DNA"/>
</dbReference>
<dbReference type="SMR" id="Q8FMR0"/>
<dbReference type="STRING" id="196164.gene:10742884"/>
<dbReference type="KEGG" id="cef:CE2443"/>
<dbReference type="eggNOG" id="COG0766">
    <property type="taxonomic scope" value="Bacteria"/>
</dbReference>
<dbReference type="HOGENOM" id="CLU_027387_0_0_11"/>
<dbReference type="UniPathway" id="UPA00219"/>
<dbReference type="Proteomes" id="UP000001409">
    <property type="component" value="Chromosome"/>
</dbReference>
<dbReference type="GO" id="GO:0005737">
    <property type="term" value="C:cytoplasm"/>
    <property type="evidence" value="ECO:0007669"/>
    <property type="project" value="UniProtKB-SubCell"/>
</dbReference>
<dbReference type="GO" id="GO:0008760">
    <property type="term" value="F:UDP-N-acetylglucosamine 1-carboxyvinyltransferase activity"/>
    <property type="evidence" value="ECO:0007669"/>
    <property type="project" value="UniProtKB-UniRule"/>
</dbReference>
<dbReference type="GO" id="GO:0051301">
    <property type="term" value="P:cell division"/>
    <property type="evidence" value="ECO:0007669"/>
    <property type="project" value="UniProtKB-KW"/>
</dbReference>
<dbReference type="GO" id="GO:0071555">
    <property type="term" value="P:cell wall organization"/>
    <property type="evidence" value="ECO:0007669"/>
    <property type="project" value="UniProtKB-KW"/>
</dbReference>
<dbReference type="GO" id="GO:0009252">
    <property type="term" value="P:peptidoglycan biosynthetic process"/>
    <property type="evidence" value="ECO:0007669"/>
    <property type="project" value="UniProtKB-UniRule"/>
</dbReference>
<dbReference type="GO" id="GO:0008360">
    <property type="term" value="P:regulation of cell shape"/>
    <property type="evidence" value="ECO:0007669"/>
    <property type="project" value="UniProtKB-KW"/>
</dbReference>
<dbReference type="GO" id="GO:0019277">
    <property type="term" value="P:UDP-N-acetylgalactosamine biosynthetic process"/>
    <property type="evidence" value="ECO:0007669"/>
    <property type="project" value="InterPro"/>
</dbReference>
<dbReference type="CDD" id="cd01555">
    <property type="entry name" value="UdpNAET"/>
    <property type="match status" value="1"/>
</dbReference>
<dbReference type="Gene3D" id="3.65.10.10">
    <property type="entry name" value="Enolpyruvate transferase domain"/>
    <property type="match status" value="2"/>
</dbReference>
<dbReference type="HAMAP" id="MF_00111">
    <property type="entry name" value="MurA"/>
    <property type="match status" value="1"/>
</dbReference>
<dbReference type="InterPro" id="IPR001986">
    <property type="entry name" value="Enolpyruvate_Tfrase_dom"/>
</dbReference>
<dbReference type="InterPro" id="IPR036968">
    <property type="entry name" value="Enolpyruvate_Tfrase_sf"/>
</dbReference>
<dbReference type="InterPro" id="IPR050068">
    <property type="entry name" value="MurA_subfamily"/>
</dbReference>
<dbReference type="InterPro" id="IPR013792">
    <property type="entry name" value="RNA3'P_cycl/enolpyr_Trfase_a/b"/>
</dbReference>
<dbReference type="InterPro" id="IPR005750">
    <property type="entry name" value="UDP_GlcNAc_COvinyl_MurA"/>
</dbReference>
<dbReference type="NCBIfam" id="TIGR01072">
    <property type="entry name" value="murA"/>
    <property type="match status" value="1"/>
</dbReference>
<dbReference type="NCBIfam" id="NF006873">
    <property type="entry name" value="PRK09369.1"/>
    <property type="match status" value="1"/>
</dbReference>
<dbReference type="PANTHER" id="PTHR43783">
    <property type="entry name" value="UDP-N-ACETYLGLUCOSAMINE 1-CARBOXYVINYLTRANSFERASE"/>
    <property type="match status" value="1"/>
</dbReference>
<dbReference type="PANTHER" id="PTHR43783:SF1">
    <property type="entry name" value="UDP-N-ACETYLGLUCOSAMINE 1-CARBOXYVINYLTRANSFERASE"/>
    <property type="match status" value="1"/>
</dbReference>
<dbReference type="Pfam" id="PF00275">
    <property type="entry name" value="EPSP_synthase"/>
    <property type="match status" value="1"/>
</dbReference>
<dbReference type="SUPFAM" id="SSF55205">
    <property type="entry name" value="EPT/RTPC-like"/>
    <property type="match status" value="1"/>
</dbReference>
<protein>
    <recommendedName>
        <fullName evidence="1">UDP-N-acetylglucosamine 1-carboxyvinyltransferase</fullName>
        <ecNumber evidence="1">2.5.1.7</ecNumber>
    </recommendedName>
    <alternativeName>
        <fullName evidence="1">Enoylpyruvate transferase</fullName>
    </alternativeName>
    <alternativeName>
        <fullName evidence="1">UDP-N-acetylglucosamine enolpyruvyl transferase</fullName>
        <shortName evidence="1">EPT</shortName>
    </alternativeName>
</protein>
<proteinExistence type="inferred from homology"/>